<proteinExistence type="inferred from homology"/>
<keyword id="KW-0240">DNA-directed RNA polymerase</keyword>
<keyword id="KW-0460">Magnesium</keyword>
<keyword id="KW-0479">Metal-binding</keyword>
<keyword id="KW-0548">Nucleotidyltransferase</keyword>
<keyword id="KW-0804">Transcription</keyword>
<keyword id="KW-0808">Transferase</keyword>
<keyword id="KW-0862">Zinc</keyword>
<evidence type="ECO:0000255" key="1">
    <source>
        <dbReference type="HAMAP-Rule" id="MF_01322"/>
    </source>
</evidence>
<feature type="chain" id="PRO_1000086402" description="DNA-directed RNA polymerase subunit beta'">
    <location>
        <begin position="1"/>
        <end position="1399"/>
    </location>
</feature>
<feature type="binding site" evidence="1">
    <location>
        <position position="70"/>
    </location>
    <ligand>
        <name>Zn(2+)</name>
        <dbReference type="ChEBI" id="CHEBI:29105"/>
        <label>1</label>
    </ligand>
</feature>
<feature type="binding site" evidence="1">
    <location>
        <position position="72"/>
    </location>
    <ligand>
        <name>Zn(2+)</name>
        <dbReference type="ChEBI" id="CHEBI:29105"/>
        <label>1</label>
    </ligand>
</feature>
<feature type="binding site" evidence="1">
    <location>
        <position position="85"/>
    </location>
    <ligand>
        <name>Zn(2+)</name>
        <dbReference type="ChEBI" id="CHEBI:29105"/>
        <label>1</label>
    </ligand>
</feature>
<feature type="binding site" evidence="1">
    <location>
        <position position="88"/>
    </location>
    <ligand>
        <name>Zn(2+)</name>
        <dbReference type="ChEBI" id="CHEBI:29105"/>
        <label>1</label>
    </ligand>
</feature>
<feature type="binding site" evidence="1">
    <location>
        <position position="460"/>
    </location>
    <ligand>
        <name>Mg(2+)</name>
        <dbReference type="ChEBI" id="CHEBI:18420"/>
    </ligand>
</feature>
<feature type="binding site" evidence="1">
    <location>
        <position position="462"/>
    </location>
    <ligand>
        <name>Mg(2+)</name>
        <dbReference type="ChEBI" id="CHEBI:18420"/>
    </ligand>
</feature>
<feature type="binding site" evidence="1">
    <location>
        <position position="464"/>
    </location>
    <ligand>
        <name>Mg(2+)</name>
        <dbReference type="ChEBI" id="CHEBI:18420"/>
    </ligand>
</feature>
<feature type="binding site" evidence="1">
    <location>
        <position position="814"/>
    </location>
    <ligand>
        <name>Zn(2+)</name>
        <dbReference type="ChEBI" id="CHEBI:29105"/>
        <label>2</label>
    </ligand>
</feature>
<feature type="binding site" evidence="1">
    <location>
        <position position="888"/>
    </location>
    <ligand>
        <name>Zn(2+)</name>
        <dbReference type="ChEBI" id="CHEBI:29105"/>
        <label>2</label>
    </ligand>
</feature>
<feature type="binding site" evidence="1">
    <location>
        <position position="895"/>
    </location>
    <ligand>
        <name>Zn(2+)</name>
        <dbReference type="ChEBI" id="CHEBI:29105"/>
        <label>2</label>
    </ligand>
</feature>
<feature type="binding site" evidence="1">
    <location>
        <position position="898"/>
    </location>
    <ligand>
        <name>Zn(2+)</name>
        <dbReference type="ChEBI" id="CHEBI:29105"/>
        <label>2</label>
    </ligand>
</feature>
<comment type="function">
    <text evidence="1">DNA-dependent RNA polymerase catalyzes the transcription of DNA into RNA using the four ribonucleoside triphosphates as substrates.</text>
</comment>
<comment type="catalytic activity">
    <reaction evidence="1">
        <text>RNA(n) + a ribonucleoside 5'-triphosphate = RNA(n+1) + diphosphate</text>
        <dbReference type="Rhea" id="RHEA:21248"/>
        <dbReference type="Rhea" id="RHEA-COMP:14527"/>
        <dbReference type="Rhea" id="RHEA-COMP:17342"/>
        <dbReference type="ChEBI" id="CHEBI:33019"/>
        <dbReference type="ChEBI" id="CHEBI:61557"/>
        <dbReference type="ChEBI" id="CHEBI:140395"/>
        <dbReference type="EC" id="2.7.7.6"/>
    </reaction>
</comment>
<comment type="cofactor">
    <cofactor evidence="1">
        <name>Mg(2+)</name>
        <dbReference type="ChEBI" id="CHEBI:18420"/>
    </cofactor>
    <text evidence="1">Binds 1 Mg(2+) ion per subunit.</text>
</comment>
<comment type="cofactor">
    <cofactor evidence="1">
        <name>Zn(2+)</name>
        <dbReference type="ChEBI" id="CHEBI:29105"/>
    </cofactor>
    <text evidence="1">Binds 2 Zn(2+) ions per subunit.</text>
</comment>
<comment type="subunit">
    <text evidence="1">The RNAP catalytic core consists of 2 alpha, 1 beta, 1 beta' and 1 omega subunit. When a sigma factor is associated with the core the holoenzyme is formed, which can initiate transcription.</text>
</comment>
<comment type="similarity">
    <text evidence="1">Belongs to the RNA polymerase beta' chain family.</text>
</comment>
<accession>Q1IFX2</accession>
<sequence>MKDLLNLLKNQGQVEEFDAIRIGLASPEMIRSWSFGEVKKPETINYRTFKPERDGLFCAKIFGPVKDYECLCGKYKRLKHRGVICEKCGVEVALAKVRRERMAHIELASPVAHIWFLKSLPSRIGLLMDMTLRDIERVLYFESYVVIDPGMTTLEKGQLLNDEQYFEALEEFGDDFDARMGAEAVRELLHAIDLEHEIGRLREEIPQTNSETKIKKLSKRLKLMEAFQGSGNLPEWMVLTVLPVLPPDLRPLVPLDGGRFATSDLNDLYRRVINRNNRLKRLLDLSAPDIIVRNEKRMLQEAVDALLDNGRRGRAITGSNKRPLKSLADMIKGKQGRFRQNLLGKRVDYSGRSVITVGPTLRLHQCGLPKKMALELFKPFIFGKLEMRGLATTIKAAKKMVERELPEVWDVLAEVIREHPVLLNRAPTLHRLGIQAFEPVLIEGKAIQLHPLVCAAYNADFDGDQMAVHVPLTLEAQLEARALMMSTNNILSPANGEPIIVPSQDVVLGLYYMTREAINAKGEGRVFADLQEVDRVFRAGEAALHAKIKVRINETVKDRDGSITKNTRIVDTTVGRALLFQVVPAGLPYDVVNQPMKKKAISKLINQCYRVVGLKETVIFADQLMYTGFAYSTISGVSIGVNDFVIPDEKARIIGTATDEVKEIESQYASGLVTQGEKYNKVIDLWSKANDEVSKAMMANLSKEKVIDRNGDEVEQESFNSMYMMADSGARGSAAQIRQLAGMRGLMAKPDGSIIETPITANFREGLSVLQYFISTHGARKGLADTALKTANSGYLTRRLVDVAQDLVVTEIDCGTEQGLLMTPHIEGGDVVEPLGERVLGRVIARDVFKPGTEDVIVPAGTLVDEQWVEFIELNSIDEVIVRSPINCETRYGICAKCYGRDLARGHQVNIGEAVGVIAAQSIGEPGTQLTMRTFHIGGAASRTSAADSVQVKNGGMVRLHNLKQVVRADGNLVAVSRSGELAIADEFGRERERYKLPYGAVISVKEGEKVEAGAIVAKWDPHTHPIVTELKGTVTFVGMEENITIKRQTDELTGLTNIEVMDVKDRPAAGKEIRPAIKMVDANGKDLYLPGTDVPAQYFLPANALVGVADGAQIGVGDVIARIPQETSKTRDITGGLPRVADLFEARRPKEASILAEVSGTIAFGKETKGKRRLVITPTDGSDPYEELIPKWRHLNVFEGEQVNRGEVISDGPSDPHDILRLLGVSALAKYIVNEIQDVYRLQGVKINDKHIETILRQMLRKVEIAESGDSSFIKGDQMELTQVLVENERLAAEDKFISKYTRVLLGITKASLSTESFISAASFQETTRVLTEAAVTGKRDYLRGLKENVVVGRLIPAGTGLAYHSERKRRRDADKPLRVSASEVEAALTEALNSSGN</sequence>
<reference key="1">
    <citation type="journal article" date="2006" name="Nat. Biotechnol.">
        <title>Complete genome sequence of the entomopathogenic and metabolically versatile soil bacterium Pseudomonas entomophila.</title>
        <authorList>
            <person name="Vodovar N."/>
            <person name="Vallenet D."/>
            <person name="Cruveiller S."/>
            <person name="Rouy Z."/>
            <person name="Barbe V."/>
            <person name="Acosta C."/>
            <person name="Cattolico L."/>
            <person name="Jubin C."/>
            <person name="Lajus A."/>
            <person name="Segurens B."/>
            <person name="Vacherie B."/>
            <person name="Wincker P."/>
            <person name="Weissenbach J."/>
            <person name="Lemaitre B."/>
            <person name="Medigue C."/>
            <person name="Boccard F."/>
        </authorList>
    </citation>
    <scope>NUCLEOTIDE SEQUENCE [LARGE SCALE GENOMIC DNA]</scope>
    <source>
        <strain>L48</strain>
    </source>
</reference>
<gene>
    <name evidence="1" type="primary">rpoC</name>
    <name type="ordered locus">PSEEN0483</name>
</gene>
<dbReference type="EC" id="2.7.7.6" evidence="1"/>
<dbReference type="EMBL" id="CT573326">
    <property type="protein sequence ID" value="CAK13430.1"/>
    <property type="molecule type" value="Genomic_DNA"/>
</dbReference>
<dbReference type="RefSeq" id="WP_011531885.1">
    <property type="nucleotide sequence ID" value="NC_008027.1"/>
</dbReference>
<dbReference type="SMR" id="Q1IFX2"/>
<dbReference type="STRING" id="384676.PSEEN0483"/>
<dbReference type="GeneID" id="32803819"/>
<dbReference type="KEGG" id="pen:PSEEN0483"/>
<dbReference type="eggNOG" id="COG0086">
    <property type="taxonomic scope" value="Bacteria"/>
</dbReference>
<dbReference type="HOGENOM" id="CLU_000524_3_1_6"/>
<dbReference type="OrthoDB" id="9815296at2"/>
<dbReference type="Proteomes" id="UP000000658">
    <property type="component" value="Chromosome"/>
</dbReference>
<dbReference type="GO" id="GO:0000428">
    <property type="term" value="C:DNA-directed RNA polymerase complex"/>
    <property type="evidence" value="ECO:0007669"/>
    <property type="project" value="UniProtKB-KW"/>
</dbReference>
<dbReference type="GO" id="GO:0003677">
    <property type="term" value="F:DNA binding"/>
    <property type="evidence" value="ECO:0007669"/>
    <property type="project" value="UniProtKB-UniRule"/>
</dbReference>
<dbReference type="GO" id="GO:0003899">
    <property type="term" value="F:DNA-directed RNA polymerase activity"/>
    <property type="evidence" value="ECO:0007669"/>
    <property type="project" value="UniProtKB-UniRule"/>
</dbReference>
<dbReference type="GO" id="GO:0000287">
    <property type="term" value="F:magnesium ion binding"/>
    <property type="evidence" value="ECO:0007669"/>
    <property type="project" value="UniProtKB-UniRule"/>
</dbReference>
<dbReference type="GO" id="GO:0008270">
    <property type="term" value="F:zinc ion binding"/>
    <property type="evidence" value="ECO:0007669"/>
    <property type="project" value="UniProtKB-UniRule"/>
</dbReference>
<dbReference type="GO" id="GO:0006351">
    <property type="term" value="P:DNA-templated transcription"/>
    <property type="evidence" value="ECO:0007669"/>
    <property type="project" value="UniProtKB-UniRule"/>
</dbReference>
<dbReference type="CDD" id="cd02655">
    <property type="entry name" value="RNAP_beta'_C"/>
    <property type="match status" value="1"/>
</dbReference>
<dbReference type="CDD" id="cd01609">
    <property type="entry name" value="RNAP_beta'_N"/>
    <property type="match status" value="1"/>
</dbReference>
<dbReference type="FunFam" id="1.10.132.30:FF:000003">
    <property type="entry name" value="DNA-directed RNA polymerase subunit beta"/>
    <property type="match status" value="1"/>
</dbReference>
<dbReference type="FunFam" id="1.10.150.390:FF:000002">
    <property type="entry name" value="DNA-directed RNA polymerase subunit beta"/>
    <property type="match status" value="1"/>
</dbReference>
<dbReference type="FunFam" id="1.10.40.90:FF:000001">
    <property type="entry name" value="DNA-directed RNA polymerase subunit beta"/>
    <property type="match status" value="1"/>
</dbReference>
<dbReference type="FunFam" id="4.10.860.120:FF:000001">
    <property type="entry name" value="DNA-directed RNA polymerase subunit beta"/>
    <property type="match status" value="1"/>
</dbReference>
<dbReference type="Gene3D" id="1.10.132.30">
    <property type="match status" value="1"/>
</dbReference>
<dbReference type="Gene3D" id="1.10.150.390">
    <property type="match status" value="1"/>
</dbReference>
<dbReference type="Gene3D" id="1.10.1790.20">
    <property type="match status" value="1"/>
</dbReference>
<dbReference type="Gene3D" id="1.10.40.90">
    <property type="match status" value="1"/>
</dbReference>
<dbReference type="Gene3D" id="2.40.40.20">
    <property type="match status" value="1"/>
</dbReference>
<dbReference type="Gene3D" id="2.40.50.100">
    <property type="match status" value="3"/>
</dbReference>
<dbReference type="Gene3D" id="4.10.860.120">
    <property type="entry name" value="RNA polymerase II, clamp domain"/>
    <property type="match status" value="1"/>
</dbReference>
<dbReference type="Gene3D" id="1.10.274.100">
    <property type="entry name" value="RNA polymerase Rpb1, domain 3"/>
    <property type="match status" value="1"/>
</dbReference>
<dbReference type="HAMAP" id="MF_01322">
    <property type="entry name" value="RNApol_bact_RpoC"/>
    <property type="match status" value="1"/>
</dbReference>
<dbReference type="InterPro" id="IPR045867">
    <property type="entry name" value="DNA-dir_RpoC_beta_prime"/>
</dbReference>
<dbReference type="InterPro" id="IPR012754">
    <property type="entry name" value="DNA-dir_RpoC_beta_prime_bact"/>
</dbReference>
<dbReference type="InterPro" id="IPR000722">
    <property type="entry name" value="RNA_pol_asu"/>
</dbReference>
<dbReference type="InterPro" id="IPR006592">
    <property type="entry name" value="RNA_pol_N"/>
</dbReference>
<dbReference type="InterPro" id="IPR007080">
    <property type="entry name" value="RNA_pol_Rpb1_1"/>
</dbReference>
<dbReference type="InterPro" id="IPR007066">
    <property type="entry name" value="RNA_pol_Rpb1_3"/>
</dbReference>
<dbReference type="InterPro" id="IPR042102">
    <property type="entry name" value="RNA_pol_Rpb1_3_sf"/>
</dbReference>
<dbReference type="InterPro" id="IPR007083">
    <property type="entry name" value="RNA_pol_Rpb1_4"/>
</dbReference>
<dbReference type="InterPro" id="IPR007081">
    <property type="entry name" value="RNA_pol_Rpb1_5"/>
</dbReference>
<dbReference type="InterPro" id="IPR044893">
    <property type="entry name" value="RNA_pol_Rpb1_clamp_domain"/>
</dbReference>
<dbReference type="InterPro" id="IPR038120">
    <property type="entry name" value="Rpb1_funnel_sf"/>
</dbReference>
<dbReference type="NCBIfam" id="TIGR02386">
    <property type="entry name" value="rpoC_TIGR"/>
    <property type="match status" value="1"/>
</dbReference>
<dbReference type="PANTHER" id="PTHR19376">
    <property type="entry name" value="DNA-DIRECTED RNA POLYMERASE"/>
    <property type="match status" value="1"/>
</dbReference>
<dbReference type="PANTHER" id="PTHR19376:SF54">
    <property type="entry name" value="DNA-DIRECTED RNA POLYMERASE SUBUNIT BETA"/>
    <property type="match status" value="1"/>
</dbReference>
<dbReference type="Pfam" id="PF04997">
    <property type="entry name" value="RNA_pol_Rpb1_1"/>
    <property type="match status" value="1"/>
</dbReference>
<dbReference type="Pfam" id="PF00623">
    <property type="entry name" value="RNA_pol_Rpb1_2"/>
    <property type="match status" value="2"/>
</dbReference>
<dbReference type="Pfam" id="PF04983">
    <property type="entry name" value="RNA_pol_Rpb1_3"/>
    <property type="match status" value="1"/>
</dbReference>
<dbReference type="Pfam" id="PF05000">
    <property type="entry name" value="RNA_pol_Rpb1_4"/>
    <property type="match status" value="1"/>
</dbReference>
<dbReference type="Pfam" id="PF04998">
    <property type="entry name" value="RNA_pol_Rpb1_5"/>
    <property type="match status" value="1"/>
</dbReference>
<dbReference type="SMART" id="SM00663">
    <property type="entry name" value="RPOLA_N"/>
    <property type="match status" value="1"/>
</dbReference>
<dbReference type="SUPFAM" id="SSF64484">
    <property type="entry name" value="beta and beta-prime subunits of DNA dependent RNA-polymerase"/>
    <property type="match status" value="1"/>
</dbReference>
<name>RPOC_PSEE4</name>
<organism>
    <name type="scientific">Pseudomonas entomophila (strain L48)</name>
    <dbReference type="NCBI Taxonomy" id="384676"/>
    <lineage>
        <taxon>Bacteria</taxon>
        <taxon>Pseudomonadati</taxon>
        <taxon>Pseudomonadota</taxon>
        <taxon>Gammaproteobacteria</taxon>
        <taxon>Pseudomonadales</taxon>
        <taxon>Pseudomonadaceae</taxon>
        <taxon>Pseudomonas</taxon>
    </lineage>
</organism>
<protein>
    <recommendedName>
        <fullName evidence="1">DNA-directed RNA polymerase subunit beta'</fullName>
        <shortName evidence="1">RNAP subunit beta'</shortName>
        <ecNumber evidence="1">2.7.7.6</ecNumber>
    </recommendedName>
    <alternativeName>
        <fullName evidence="1">RNA polymerase subunit beta'</fullName>
    </alternativeName>
    <alternativeName>
        <fullName evidence="1">Transcriptase subunit beta'</fullName>
    </alternativeName>
</protein>